<keyword id="KW-0004">4Fe-4S</keyword>
<keyword id="KW-0408">Iron</keyword>
<keyword id="KW-0411">Iron-sulfur</keyword>
<keyword id="KW-0414">Isoprene biosynthesis</keyword>
<keyword id="KW-0479">Metal-binding</keyword>
<keyword id="KW-0560">Oxidoreductase</keyword>
<name>ISPH_CHLPN</name>
<evidence type="ECO:0000255" key="1">
    <source>
        <dbReference type="HAMAP-Rule" id="MF_00191"/>
    </source>
</evidence>
<proteinExistence type="inferred from homology"/>
<reference key="1">
    <citation type="journal article" date="1999" name="Nat. Genet.">
        <title>Comparative genomes of Chlamydia pneumoniae and C. trachomatis.</title>
        <authorList>
            <person name="Kalman S."/>
            <person name="Mitchell W.P."/>
            <person name="Marathe R."/>
            <person name="Lammel C.J."/>
            <person name="Fan J."/>
            <person name="Hyman R.W."/>
            <person name="Olinger L."/>
            <person name="Grimwood J."/>
            <person name="Davis R.W."/>
            <person name="Stephens R.S."/>
        </authorList>
    </citation>
    <scope>NUCLEOTIDE SEQUENCE [LARGE SCALE GENOMIC DNA]</scope>
    <source>
        <strain>CWL029</strain>
    </source>
</reference>
<reference key="2">
    <citation type="journal article" date="2000" name="Nucleic Acids Res.">
        <title>Genome sequences of Chlamydia trachomatis MoPn and Chlamydia pneumoniae AR39.</title>
        <authorList>
            <person name="Read T.D."/>
            <person name="Brunham R.C."/>
            <person name="Shen C."/>
            <person name="Gill S.R."/>
            <person name="Heidelberg J.F."/>
            <person name="White O."/>
            <person name="Hickey E.K."/>
            <person name="Peterson J.D."/>
            <person name="Utterback T.R."/>
            <person name="Berry K.J."/>
            <person name="Bass S."/>
            <person name="Linher K.D."/>
            <person name="Weidman J.F."/>
            <person name="Khouri H.M."/>
            <person name="Craven B."/>
            <person name="Bowman C."/>
            <person name="Dodson R.J."/>
            <person name="Gwinn M.L."/>
            <person name="Nelson W.C."/>
            <person name="DeBoy R.T."/>
            <person name="Kolonay J.F."/>
            <person name="McClarty G."/>
            <person name="Salzberg S.L."/>
            <person name="Eisen J.A."/>
            <person name="Fraser C.M."/>
        </authorList>
    </citation>
    <scope>NUCLEOTIDE SEQUENCE [LARGE SCALE GENOMIC DNA]</scope>
    <source>
        <strain>AR39</strain>
    </source>
</reference>
<reference key="3">
    <citation type="journal article" date="2000" name="Nucleic Acids Res.">
        <title>Comparison of whole genome sequences of Chlamydia pneumoniae J138 from Japan and CWL029 from USA.</title>
        <authorList>
            <person name="Shirai M."/>
            <person name="Hirakawa H."/>
            <person name="Kimoto M."/>
            <person name="Tabuchi M."/>
            <person name="Kishi F."/>
            <person name="Ouchi K."/>
            <person name="Shiba T."/>
            <person name="Ishii K."/>
            <person name="Hattori M."/>
            <person name="Kuhara S."/>
            <person name="Nakazawa T."/>
        </authorList>
    </citation>
    <scope>NUCLEOTIDE SEQUENCE [LARGE SCALE GENOMIC DNA]</scope>
    <source>
        <strain>J138</strain>
    </source>
</reference>
<reference key="4">
    <citation type="submission" date="2002-05" db="EMBL/GenBank/DDBJ databases">
        <title>The genome sequence of Chlamydia pneumoniae TW183 and comparison with other Chlamydia strains based on whole genome sequence analysis.</title>
        <authorList>
            <person name="Geng M.M."/>
            <person name="Schuhmacher A."/>
            <person name="Muehldorfer I."/>
            <person name="Bensch K.W."/>
            <person name="Schaefer K.P."/>
            <person name="Schneider S."/>
            <person name="Pohl T."/>
            <person name="Essig A."/>
            <person name="Marre R."/>
            <person name="Melchers K."/>
        </authorList>
    </citation>
    <scope>NUCLEOTIDE SEQUENCE [LARGE SCALE GENOMIC DNA]</scope>
    <source>
        <strain>TW-183</strain>
    </source>
</reference>
<comment type="function">
    <text evidence="1">Catalyzes the conversion of 1-hydroxy-2-methyl-2-(E)-butenyl 4-diphosphate (HMBPP) into a mixture of isopentenyl diphosphate (IPP) and dimethylallyl diphosphate (DMAPP). Acts in the terminal step of the DOXP/MEP pathway for isoprenoid precursor biosynthesis.</text>
</comment>
<comment type="catalytic activity">
    <reaction evidence="1">
        <text>isopentenyl diphosphate + 2 oxidized [2Fe-2S]-[ferredoxin] + H2O = (2E)-4-hydroxy-3-methylbut-2-enyl diphosphate + 2 reduced [2Fe-2S]-[ferredoxin] + 2 H(+)</text>
        <dbReference type="Rhea" id="RHEA:24488"/>
        <dbReference type="Rhea" id="RHEA-COMP:10000"/>
        <dbReference type="Rhea" id="RHEA-COMP:10001"/>
        <dbReference type="ChEBI" id="CHEBI:15377"/>
        <dbReference type="ChEBI" id="CHEBI:15378"/>
        <dbReference type="ChEBI" id="CHEBI:33737"/>
        <dbReference type="ChEBI" id="CHEBI:33738"/>
        <dbReference type="ChEBI" id="CHEBI:128753"/>
        <dbReference type="ChEBI" id="CHEBI:128769"/>
        <dbReference type="EC" id="1.17.7.4"/>
    </reaction>
</comment>
<comment type="catalytic activity">
    <reaction evidence="1">
        <text>dimethylallyl diphosphate + 2 oxidized [2Fe-2S]-[ferredoxin] + H2O = (2E)-4-hydroxy-3-methylbut-2-enyl diphosphate + 2 reduced [2Fe-2S]-[ferredoxin] + 2 H(+)</text>
        <dbReference type="Rhea" id="RHEA:24825"/>
        <dbReference type="Rhea" id="RHEA-COMP:10000"/>
        <dbReference type="Rhea" id="RHEA-COMP:10001"/>
        <dbReference type="ChEBI" id="CHEBI:15377"/>
        <dbReference type="ChEBI" id="CHEBI:15378"/>
        <dbReference type="ChEBI" id="CHEBI:33737"/>
        <dbReference type="ChEBI" id="CHEBI:33738"/>
        <dbReference type="ChEBI" id="CHEBI:57623"/>
        <dbReference type="ChEBI" id="CHEBI:128753"/>
        <dbReference type="EC" id="1.17.7.4"/>
    </reaction>
</comment>
<comment type="cofactor">
    <cofactor evidence="1">
        <name>[4Fe-4S] cluster</name>
        <dbReference type="ChEBI" id="CHEBI:49883"/>
    </cofactor>
    <text evidence="1">Binds 1 [4Fe-4S] cluster per subunit.</text>
</comment>
<comment type="pathway">
    <text evidence="1">Isoprenoid biosynthesis; dimethylallyl diphosphate biosynthesis; dimethylallyl diphosphate from (2E)-4-hydroxy-3-methylbutenyl diphosphate: step 1/1.</text>
</comment>
<comment type="pathway">
    <text evidence="1">Isoprenoid biosynthesis; isopentenyl diphosphate biosynthesis via DXP pathway; isopentenyl diphosphate from 1-deoxy-D-xylulose 5-phosphate: step 6/6.</text>
</comment>
<comment type="similarity">
    <text evidence="1">Belongs to the IspH family.</text>
</comment>
<sequence length="310" mass="33935">MRKLILCNPRGFCSGVVRAIQVVEVALEKWGAPIYVKHEIVHNRHVVNALRAKGAIFVEELVDVPEGERVIYSAHGIPPSVRAEAKARKLIDIDATCGLVTKVHSAAKLYASKGYKIILIGHKKHVEVIGIVGEVPEHITVVEKVADVEALPFSSDTPLFYITQTTLSLDDVQEISSALLKRYPSIITLPSSSICYATTNRQKALRSVLSRVNYVYVVGDVNSSNSNRLREVALRRGVPADLINNPEDIDTNIVNHSGDIAMTAGASTPEDVVQACIRKLSSLIPGLQVENDIFAVEDVVFQLPKELRCS</sequence>
<gene>
    <name evidence="1" type="primary">ispH</name>
    <name type="synonym">lytB</name>
    <name type="ordered locus">CPn_1017</name>
    <name type="ordered locus">CP_0836</name>
    <name type="ordered locus">CpB1055</name>
</gene>
<protein>
    <recommendedName>
        <fullName evidence="1">4-hydroxy-3-methylbut-2-enyl diphosphate reductase</fullName>
        <shortName evidence="1">HMBPP reductase</shortName>
        <ecNumber evidence="1">1.17.7.4</ecNumber>
    </recommendedName>
</protein>
<accession>Q9Z6P2</accession>
<accession>Q9JQB2</accession>
<organism>
    <name type="scientific">Chlamydia pneumoniae</name>
    <name type="common">Chlamydophila pneumoniae</name>
    <dbReference type="NCBI Taxonomy" id="83558"/>
    <lineage>
        <taxon>Bacteria</taxon>
        <taxon>Pseudomonadati</taxon>
        <taxon>Chlamydiota</taxon>
        <taxon>Chlamydiia</taxon>
        <taxon>Chlamydiales</taxon>
        <taxon>Chlamydiaceae</taxon>
        <taxon>Chlamydia/Chlamydophila group</taxon>
        <taxon>Chlamydia</taxon>
    </lineage>
</organism>
<feature type="chain" id="PRO_0000128801" description="4-hydroxy-3-methylbut-2-enyl diphosphate reductase">
    <location>
        <begin position="1"/>
        <end position="310"/>
    </location>
</feature>
<feature type="active site" description="Proton donor" evidence="1">
    <location>
        <position position="127"/>
    </location>
</feature>
<feature type="binding site" evidence="1">
    <location>
        <position position="13"/>
    </location>
    <ligand>
        <name>[4Fe-4S] cluster</name>
        <dbReference type="ChEBI" id="CHEBI:49883"/>
    </ligand>
</feature>
<feature type="binding site" evidence="1">
    <location>
        <position position="42"/>
    </location>
    <ligand>
        <name>(2E)-4-hydroxy-3-methylbut-2-enyl diphosphate</name>
        <dbReference type="ChEBI" id="CHEBI:128753"/>
    </ligand>
</feature>
<feature type="binding site" evidence="1">
    <location>
        <position position="42"/>
    </location>
    <ligand>
        <name>dimethylallyl diphosphate</name>
        <dbReference type="ChEBI" id="CHEBI:57623"/>
    </ligand>
</feature>
<feature type="binding site" evidence="1">
    <location>
        <position position="42"/>
    </location>
    <ligand>
        <name>isopentenyl diphosphate</name>
        <dbReference type="ChEBI" id="CHEBI:128769"/>
    </ligand>
</feature>
<feature type="binding site" evidence="1">
    <location>
        <position position="75"/>
    </location>
    <ligand>
        <name>(2E)-4-hydroxy-3-methylbut-2-enyl diphosphate</name>
        <dbReference type="ChEBI" id="CHEBI:128753"/>
    </ligand>
</feature>
<feature type="binding site" evidence="1">
    <location>
        <position position="75"/>
    </location>
    <ligand>
        <name>dimethylallyl diphosphate</name>
        <dbReference type="ChEBI" id="CHEBI:57623"/>
    </ligand>
</feature>
<feature type="binding site" evidence="1">
    <location>
        <position position="75"/>
    </location>
    <ligand>
        <name>isopentenyl diphosphate</name>
        <dbReference type="ChEBI" id="CHEBI:128769"/>
    </ligand>
</feature>
<feature type="binding site" evidence="1">
    <location>
        <position position="97"/>
    </location>
    <ligand>
        <name>[4Fe-4S] cluster</name>
        <dbReference type="ChEBI" id="CHEBI:49883"/>
    </ligand>
</feature>
<feature type="binding site" evidence="1">
    <location>
        <position position="125"/>
    </location>
    <ligand>
        <name>(2E)-4-hydroxy-3-methylbut-2-enyl diphosphate</name>
        <dbReference type="ChEBI" id="CHEBI:128753"/>
    </ligand>
</feature>
<feature type="binding site" evidence="1">
    <location>
        <position position="125"/>
    </location>
    <ligand>
        <name>dimethylallyl diphosphate</name>
        <dbReference type="ChEBI" id="CHEBI:57623"/>
    </ligand>
</feature>
<feature type="binding site" evidence="1">
    <location>
        <position position="125"/>
    </location>
    <ligand>
        <name>isopentenyl diphosphate</name>
        <dbReference type="ChEBI" id="CHEBI:128769"/>
    </ligand>
</feature>
<feature type="binding site" evidence="1">
    <location>
        <position position="165"/>
    </location>
    <ligand>
        <name>(2E)-4-hydroxy-3-methylbut-2-enyl diphosphate</name>
        <dbReference type="ChEBI" id="CHEBI:128753"/>
    </ligand>
</feature>
<feature type="binding site" evidence="1">
    <location>
        <position position="195"/>
    </location>
    <ligand>
        <name>[4Fe-4S] cluster</name>
        <dbReference type="ChEBI" id="CHEBI:49883"/>
    </ligand>
</feature>
<feature type="binding site" evidence="1">
    <location>
        <position position="223"/>
    </location>
    <ligand>
        <name>(2E)-4-hydroxy-3-methylbut-2-enyl diphosphate</name>
        <dbReference type="ChEBI" id="CHEBI:128753"/>
    </ligand>
</feature>
<feature type="binding site" evidence="1">
    <location>
        <position position="223"/>
    </location>
    <ligand>
        <name>dimethylallyl diphosphate</name>
        <dbReference type="ChEBI" id="CHEBI:57623"/>
    </ligand>
</feature>
<feature type="binding site" evidence="1">
    <location>
        <position position="223"/>
    </location>
    <ligand>
        <name>isopentenyl diphosphate</name>
        <dbReference type="ChEBI" id="CHEBI:128769"/>
    </ligand>
</feature>
<feature type="binding site" evidence="1">
    <location>
        <position position="224"/>
    </location>
    <ligand>
        <name>(2E)-4-hydroxy-3-methylbut-2-enyl diphosphate</name>
        <dbReference type="ChEBI" id="CHEBI:128753"/>
    </ligand>
</feature>
<feature type="binding site" evidence="1">
    <location>
        <position position="224"/>
    </location>
    <ligand>
        <name>dimethylallyl diphosphate</name>
        <dbReference type="ChEBI" id="CHEBI:57623"/>
    </ligand>
</feature>
<feature type="binding site" evidence="1">
    <location>
        <position position="224"/>
    </location>
    <ligand>
        <name>isopentenyl diphosphate</name>
        <dbReference type="ChEBI" id="CHEBI:128769"/>
    </ligand>
</feature>
<feature type="binding site" evidence="1">
    <location>
        <position position="225"/>
    </location>
    <ligand>
        <name>(2E)-4-hydroxy-3-methylbut-2-enyl diphosphate</name>
        <dbReference type="ChEBI" id="CHEBI:128753"/>
    </ligand>
</feature>
<feature type="binding site" evidence="1">
    <location>
        <position position="225"/>
    </location>
    <ligand>
        <name>dimethylallyl diphosphate</name>
        <dbReference type="ChEBI" id="CHEBI:57623"/>
    </ligand>
</feature>
<feature type="binding site" evidence="1">
    <location>
        <position position="225"/>
    </location>
    <ligand>
        <name>isopentenyl diphosphate</name>
        <dbReference type="ChEBI" id="CHEBI:128769"/>
    </ligand>
</feature>
<feature type="binding site" evidence="1">
    <location>
        <position position="267"/>
    </location>
    <ligand>
        <name>(2E)-4-hydroxy-3-methylbut-2-enyl diphosphate</name>
        <dbReference type="ChEBI" id="CHEBI:128753"/>
    </ligand>
</feature>
<feature type="binding site" evidence="1">
    <location>
        <position position="267"/>
    </location>
    <ligand>
        <name>dimethylallyl diphosphate</name>
        <dbReference type="ChEBI" id="CHEBI:57623"/>
    </ligand>
</feature>
<feature type="binding site" evidence="1">
    <location>
        <position position="267"/>
    </location>
    <ligand>
        <name>isopentenyl diphosphate</name>
        <dbReference type="ChEBI" id="CHEBI:128769"/>
    </ligand>
</feature>
<dbReference type="EC" id="1.17.7.4" evidence="1"/>
<dbReference type="EMBL" id="AE001363">
    <property type="protein sequence ID" value="AAD19154.1"/>
    <property type="molecule type" value="Genomic_DNA"/>
</dbReference>
<dbReference type="EMBL" id="AE002161">
    <property type="protein sequence ID" value="AAF38629.1"/>
    <property type="molecule type" value="Genomic_DNA"/>
</dbReference>
<dbReference type="EMBL" id="BA000008">
    <property type="protein sequence ID" value="BAA99224.1"/>
    <property type="molecule type" value="Genomic_DNA"/>
</dbReference>
<dbReference type="EMBL" id="AE009440">
    <property type="protein sequence ID" value="AAP98984.1"/>
    <property type="molecule type" value="Genomic_DNA"/>
</dbReference>
<dbReference type="PIR" id="F86617">
    <property type="entry name" value="F86617"/>
</dbReference>
<dbReference type="PIR" id="G72006">
    <property type="entry name" value="G72006"/>
</dbReference>
<dbReference type="RefSeq" id="NP_225211.1">
    <property type="nucleotide sequence ID" value="NC_000922.1"/>
</dbReference>
<dbReference type="RefSeq" id="WP_010883650.1">
    <property type="nucleotide sequence ID" value="NZ_LN847257.1"/>
</dbReference>
<dbReference type="SMR" id="Q9Z6P2"/>
<dbReference type="STRING" id="406984.CPK_ORF00443"/>
<dbReference type="GeneID" id="45051074"/>
<dbReference type="KEGG" id="cpa:CP_0836"/>
<dbReference type="KEGG" id="cpj:lytB"/>
<dbReference type="KEGG" id="cpn:CPn_1017"/>
<dbReference type="KEGG" id="cpt:CpB1055"/>
<dbReference type="PATRIC" id="fig|115713.3.peg.1114"/>
<dbReference type="eggNOG" id="COG0761">
    <property type="taxonomic scope" value="Bacteria"/>
</dbReference>
<dbReference type="HOGENOM" id="CLU_027486_1_0_0"/>
<dbReference type="OMA" id="DSICRQV"/>
<dbReference type="OrthoDB" id="9777362at2"/>
<dbReference type="UniPathway" id="UPA00056">
    <property type="reaction ID" value="UER00097"/>
</dbReference>
<dbReference type="UniPathway" id="UPA00059">
    <property type="reaction ID" value="UER00105"/>
</dbReference>
<dbReference type="Proteomes" id="UP000000583">
    <property type="component" value="Chromosome"/>
</dbReference>
<dbReference type="Proteomes" id="UP000000801">
    <property type="component" value="Chromosome"/>
</dbReference>
<dbReference type="GO" id="GO:0051539">
    <property type="term" value="F:4 iron, 4 sulfur cluster binding"/>
    <property type="evidence" value="ECO:0007669"/>
    <property type="project" value="UniProtKB-UniRule"/>
</dbReference>
<dbReference type="GO" id="GO:0051745">
    <property type="term" value="F:4-hydroxy-3-methylbut-2-enyl diphosphate reductase activity"/>
    <property type="evidence" value="ECO:0007669"/>
    <property type="project" value="UniProtKB-UniRule"/>
</dbReference>
<dbReference type="GO" id="GO:0046872">
    <property type="term" value="F:metal ion binding"/>
    <property type="evidence" value="ECO:0007669"/>
    <property type="project" value="UniProtKB-KW"/>
</dbReference>
<dbReference type="GO" id="GO:0050992">
    <property type="term" value="P:dimethylallyl diphosphate biosynthetic process"/>
    <property type="evidence" value="ECO:0007669"/>
    <property type="project" value="UniProtKB-UniRule"/>
</dbReference>
<dbReference type="GO" id="GO:0019288">
    <property type="term" value="P:isopentenyl diphosphate biosynthetic process, methylerythritol 4-phosphate pathway"/>
    <property type="evidence" value="ECO:0007669"/>
    <property type="project" value="UniProtKB-UniRule"/>
</dbReference>
<dbReference type="GO" id="GO:0016114">
    <property type="term" value="P:terpenoid biosynthetic process"/>
    <property type="evidence" value="ECO:0007669"/>
    <property type="project" value="UniProtKB-UniRule"/>
</dbReference>
<dbReference type="CDD" id="cd13944">
    <property type="entry name" value="lytB_ispH"/>
    <property type="match status" value="1"/>
</dbReference>
<dbReference type="Gene3D" id="3.40.50.11270">
    <property type="match status" value="1"/>
</dbReference>
<dbReference type="Gene3D" id="3.40.1010.20">
    <property type="entry name" value="4-hydroxy-3-methylbut-2-enyl diphosphate reductase, catalytic domain"/>
    <property type="match status" value="2"/>
</dbReference>
<dbReference type="HAMAP" id="MF_00191">
    <property type="entry name" value="IspH"/>
    <property type="match status" value="1"/>
</dbReference>
<dbReference type="InterPro" id="IPR003451">
    <property type="entry name" value="LytB/IspH"/>
</dbReference>
<dbReference type="NCBIfam" id="TIGR00216">
    <property type="entry name" value="ispH_lytB"/>
    <property type="match status" value="1"/>
</dbReference>
<dbReference type="NCBIfam" id="NF002190">
    <property type="entry name" value="PRK01045.1-4"/>
    <property type="match status" value="1"/>
</dbReference>
<dbReference type="PANTHER" id="PTHR30426">
    <property type="entry name" value="4-HYDROXY-3-METHYLBUT-2-ENYL DIPHOSPHATE REDUCTASE"/>
    <property type="match status" value="1"/>
</dbReference>
<dbReference type="PANTHER" id="PTHR30426:SF0">
    <property type="entry name" value="4-HYDROXY-3-METHYLBUT-2-ENYL DIPHOSPHATE REDUCTASE"/>
    <property type="match status" value="1"/>
</dbReference>
<dbReference type="Pfam" id="PF02401">
    <property type="entry name" value="LYTB"/>
    <property type="match status" value="1"/>
</dbReference>